<reference key="1">
    <citation type="journal article" date="2005" name="Nature">
        <title>The genome of the social amoeba Dictyostelium discoideum.</title>
        <authorList>
            <person name="Eichinger L."/>
            <person name="Pachebat J.A."/>
            <person name="Gloeckner G."/>
            <person name="Rajandream M.A."/>
            <person name="Sucgang R."/>
            <person name="Berriman M."/>
            <person name="Song J."/>
            <person name="Olsen R."/>
            <person name="Szafranski K."/>
            <person name="Xu Q."/>
            <person name="Tunggal B."/>
            <person name="Kummerfeld S."/>
            <person name="Madera M."/>
            <person name="Konfortov B.A."/>
            <person name="Rivero F."/>
            <person name="Bankier A.T."/>
            <person name="Lehmann R."/>
            <person name="Hamlin N."/>
            <person name="Davies R."/>
            <person name="Gaudet P."/>
            <person name="Fey P."/>
            <person name="Pilcher K."/>
            <person name="Chen G."/>
            <person name="Saunders D."/>
            <person name="Sodergren E.J."/>
            <person name="Davis P."/>
            <person name="Kerhornou A."/>
            <person name="Nie X."/>
            <person name="Hall N."/>
            <person name="Anjard C."/>
            <person name="Hemphill L."/>
            <person name="Bason N."/>
            <person name="Farbrother P."/>
            <person name="Desany B."/>
            <person name="Just E."/>
            <person name="Morio T."/>
            <person name="Rost R."/>
            <person name="Churcher C.M."/>
            <person name="Cooper J."/>
            <person name="Haydock S."/>
            <person name="van Driessche N."/>
            <person name="Cronin A."/>
            <person name="Goodhead I."/>
            <person name="Muzny D.M."/>
            <person name="Mourier T."/>
            <person name="Pain A."/>
            <person name="Lu M."/>
            <person name="Harper D."/>
            <person name="Lindsay R."/>
            <person name="Hauser H."/>
            <person name="James K.D."/>
            <person name="Quiles M."/>
            <person name="Madan Babu M."/>
            <person name="Saito T."/>
            <person name="Buchrieser C."/>
            <person name="Wardroper A."/>
            <person name="Felder M."/>
            <person name="Thangavelu M."/>
            <person name="Johnson D."/>
            <person name="Knights A."/>
            <person name="Loulseged H."/>
            <person name="Mungall K.L."/>
            <person name="Oliver K."/>
            <person name="Price C."/>
            <person name="Quail M.A."/>
            <person name="Urushihara H."/>
            <person name="Hernandez J."/>
            <person name="Rabbinowitsch E."/>
            <person name="Steffen D."/>
            <person name="Sanders M."/>
            <person name="Ma J."/>
            <person name="Kohara Y."/>
            <person name="Sharp S."/>
            <person name="Simmonds M.N."/>
            <person name="Spiegler S."/>
            <person name="Tivey A."/>
            <person name="Sugano S."/>
            <person name="White B."/>
            <person name="Walker D."/>
            <person name="Woodward J.R."/>
            <person name="Winckler T."/>
            <person name="Tanaka Y."/>
            <person name="Shaulsky G."/>
            <person name="Schleicher M."/>
            <person name="Weinstock G.M."/>
            <person name="Rosenthal A."/>
            <person name="Cox E.C."/>
            <person name="Chisholm R.L."/>
            <person name="Gibbs R.A."/>
            <person name="Loomis W.F."/>
            <person name="Platzer M."/>
            <person name="Kay R.R."/>
            <person name="Williams J.G."/>
            <person name="Dear P.H."/>
            <person name="Noegel A.A."/>
            <person name="Barrell B.G."/>
            <person name="Kuspa A."/>
        </authorList>
    </citation>
    <scope>NUCLEOTIDE SEQUENCE [LARGE SCALE GENOMIC DNA]</scope>
    <source>
        <strain>AX4</strain>
    </source>
</reference>
<proteinExistence type="inferred from homology"/>
<name>OST3_DICDI</name>
<dbReference type="EMBL" id="AAFI02000079">
    <property type="protein sequence ID" value="EAL64606.1"/>
    <property type="molecule type" value="Genomic_DNA"/>
</dbReference>
<dbReference type="RefSeq" id="XP_638110.1">
    <property type="nucleotide sequence ID" value="XM_633018.1"/>
</dbReference>
<dbReference type="SMR" id="Q54N33"/>
<dbReference type="FunCoup" id="Q54N33">
    <property type="interactions" value="172"/>
</dbReference>
<dbReference type="STRING" id="44689.Q54N33"/>
<dbReference type="TCDB" id="1.A.76.1.4">
    <property type="family name" value="the magnesium transporter1 (magt1) family"/>
</dbReference>
<dbReference type="PaxDb" id="44689-DDB0233177"/>
<dbReference type="EnsemblProtists" id="EAL64606">
    <property type="protein sequence ID" value="EAL64606"/>
    <property type="gene ID" value="DDB_G0285537"/>
</dbReference>
<dbReference type="GeneID" id="8625158"/>
<dbReference type="KEGG" id="ddi:DDB_G0285537"/>
<dbReference type="dictyBase" id="DDB_G0285537">
    <property type="gene designation" value="ost3"/>
</dbReference>
<dbReference type="VEuPathDB" id="AmoebaDB:DDB_G0285537"/>
<dbReference type="eggNOG" id="KOG2603">
    <property type="taxonomic scope" value="Eukaryota"/>
</dbReference>
<dbReference type="HOGENOM" id="CLU_790909_0_0_1"/>
<dbReference type="InParanoid" id="Q54N33"/>
<dbReference type="OMA" id="KVPDYPY"/>
<dbReference type="PhylomeDB" id="Q54N33"/>
<dbReference type="Reactome" id="R-DDI-5223345">
    <property type="pathway name" value="Miscellaneous transport and binding events"/>
</dbReference>
<dbReference type="Reactome" id="R-DDI-6798695">
    <property type="pathway name" value="Neutrophil degranulation"/>
</dbReference>
<dbReference type="PRO" id="PR:Q54N33"/>
<dbReference type="Proteomes" id="UP000002195">
    <property type="component" value="Chromosome 4"/>
</dbReference>
<dbReference type="GO" id="GO:0008250">
    <property type="term" value="C:oligosaccharyltransferase complex"/>
    <property type="evidence" value="ECO:0000250"/>
    <property type="project" value="dictyBase"/>
</dbReference>
<dbReference type="GO" id="GO:0004579">
    <property type="term" value="F:dolichyl-diphosphooligosaccharide-protein glycotransferase activity"/>
    <property type="evidence" value="ECO:0000250"/>
    <property type="project" value="dictyBase"/>
</dbReference>
<dbReference type="GO" id="GO:0006487">
    <property type="term" value="P:protein N-linked glycosylation"/>
    <property type="evidence" value="ECO:0000250"/>
    <property type="project" value="dictyBase"/>
</dbReference>
<dbReference type="GO" id="GO:0018279">
    <property type="term" value="P:protein N-linked glycosylation via asparagine"/>
    <property type="evidence" value="ECO:0000318"/>
    <property type="project" value="GO_Central"/>
</dbReference>
<dbReference type="FunFam" id="3.40.30.10:FF:000714">
    <property type="entry name" value="Probable dolichyl-diphosphooligosaccharide--protein glycosyltransferase subunit 3"/>
    <property type="match status" value="1"/>
</dbReference>
<dbReference type="Gene3D" id="3.40.30.10">
    <property type="entry name" value="Glutaredoxin"/>
    <property type="match status" value="1"/>
</dbReference>
<dbReference type="InterPro" id="IPR021149">
    <property type="entry name" value="OligosaccharylTrfase_OST3/OST6"/>
</dbReference>
<dbReference type="PANTHER" id="PTHR12692">
    <property type="entry name" value="DOLICHYL-DIPHOSPHOOLIGOSACCHARIDE--PROTEIN GLYCOSYLTRANSFERASE-RELATED"/>
    <property type="match status" value="1"/>
</dbReference>
<dbReference type="PANTHER" id="PTHR12692:SF0">
    <property type="entry name" value="GH11935P"/>
    <property type="match status" value="1"/>
</dbReference>
<dbReference type="Pfam" id="PF04756">
    <property type="entry name" value="OST3_OST6"/>
    <property type="match status" value="1"/>
</dbReference>
<sequence>MMKSSKVSTILLLLFVVIIGSFCLTYGAPSTTNQKPLTSSEKKLLNDLYDRAKKAGGVVEFKSNLDSKKFVTAQNRPYDLLALFTSSNPKYGCSGCVQLKNQIESFSLSYEPYLNSAGFLEKPIFIVILEVDYNMEVFQTIGLNTIPHLLFIPSGSKPITQKGYAYTGFEQTSSQSISDFIYSHSKIRIEPVKTFYEKYSVQILSFVVFLASVRFLITAYRKRKSPMFWYFLTILLFACVIMGIFYDFIHKPNFYEFDHRQQTYNYFSRGSRSQTVSEGMIMGVSTIAITLIFVFLSDILPNYTNFSSKSKGLLFFMGMSSIIVLLFFQSLAFQIKYYRPLFFIPSVTYHY</sequence>
<organism>
    <name type="scientific">Dictyostelium discoideum</name>
    <name type="common">Social amoeba</name>
    <dbReference type="NCBI Taxonomy" id="44689"/>
    <lineage>
        <taxon>Eukaryota</taxon>
        <taxon>Amoebozoa</taxon>
        <taxon>Evosea</taxon>
        <taxon>Eumycetozoa</taxon>
        <taxon>Dictyostelia</taxon>
        <taxon>Dictyosteliales</taxon>
        <taxon>Dictyosteliaceae</taxon>
        <taxon>Dictyostelium</taxon>
    </lineage>
</organism>
<protein>
    <recommendedName>
        <fullName>Probable dolichyl-diphosphooligosaccharide--protein glycosyltransferase subunit 3</fullName>
    </recommendedName>
</protein>
<gene>
    <name type="primary">ost3</name>
    <name type="ORF">DDB_G0285537</name>
</gene>
<accession>Q54N33</accession>
<keyword id="KW-1015">Disulfide bond</keyword>
<keyword id="KW-0256">Endoplasmic reticulum</keyword>
<keyword id="KW-0472">Membrane</keyword>
<keyword id="KW-1185">Reference proteome</keyword>
<keyword id="KW-0732">Signal</keyword>
<keyword id="KW-0812">Transmembrane</keyword>
<keyword id="KW-1133">Transmembrane helix</keyword>
<evidence type="ECO:0000250" key="1"/>
<evidence type="ECO:0000250" key="2">
    <source>
        <dbReference type="UniProtKB" id="P48439"/>
    </source>
</evidence>
<evidence type="ECO:0000255" key="3"/>
<evidence type="ECO:0000305" key="4"/>
<feature type="signal peptide" evidence="3">
    <location>
        <begin position="1"/>
        <end position="27"/>
    </location>
</feature>
<feature type="chain" id="PRO_0000328632" description="Probable dolichyl-diphosphooligosaccharide--protein glycosyltransferase subunit 3">
    <location>
        <begin position="28"/>
        <end position="351"/>
    </location>
</feature>
<feature type="transmembrane region" description="Helical" evidence="3">
    <location>
        <begin position="199"/>
        <end position="219"/>
    </location>
</feature>
<feature type="transmembrane region" description="Helical" evidence="3">
    <location>
        <begin position="226"/>
        <end position="246"/>
    </location>
</feature>
<feature type="transmembrane region" description="Helical" evidence="3">
    <location>
        <begin position="280"/>
        <end position="300"/>
    </location>
</feature>
<feature type="transmembrane region" description="Helical" evidence="3">
    <location>
        <begin position="313"/>
        <end position="333"/>
    </location>
</feature>
<feature type="domain" description="Thioredoxin">
    <location>
        <begin position="49"/>
        <end position="185"/>
    </location>
</feature>
<feature type="disulfide bond" description="Redox-active" evidence="1">
    <location>
        <begin position="93"/>
        <end position="96"/>
    </location>
</feature>
<comment type="function">
    <text evidence="2">Subunit of the oligosaccharyl transferase (OST) complex that catalyzes the initial transfer of a defined glycan (Glc(3)Man(9)GlcNAc(2) in eukaryotes) from the lipid carrier dolichol-pyrophosphate to an asparagine residue within an Asn-X-Ser/Thr consensus motif in nascent polypeptide chains, the first step in protein N-glycosylation. N-glycosylation occurs cotranslationally and the complex associates with the Sec61 complex at the channel-forming translocon complex that mediates protein translocation across the endoplasmic reticulum (ER). All subunits are required for a maximal enzyme activity.</text>
</comment>
<comment type="subunit">
    <text evidence="2">Component of the oligosaccharyltransferase (OST) complex.</text>
</comment>
<comment type="subcellular location">
    <subcellularLocation>
        <location evidence="1">Endoplasmic reticulum membrane</location>
        <topology evidence="1">Multi-pass membrane protein</topology>
    </subcellularLocation>
</comment>
<comment type="similarity">
    <text evidence="4">Belongs to the OST3/OST6 family.</text>
</comment>